<reference key="1">
    <citation type="journal article" date="2008" name="DNA Res.">
        <title>Determination of the genome sequence of Porphyromonas gingivalis strain ATCC 33277 and genomic comparison with strain W83 revealed extensive genome rearrangements in P. gingivalis.</title>
        <authorList>
            <person name="Naito M."/>
            <person name="Hirakawa H."/>
            <person name="Yamashita A."/>
            <person name="Ohara N."/>
            <person name="Shoji M."/>
            <person name="Yukitake H."/>
            <person name="Nakayama K."/>
            <person name="Toh H."/>
            <person name="Yoshimura F."/>
            <person name="Kuhara S."/>
            <person name="Hattori M."/>
            <person name="Hayashi T."/>
            <person name="Nakayama K."/>
        </authorList>
    </citation>
    <scope>NUCLEOTIDE SEQUENCE [LARGE SCALE GENOMIC DNA]</scope>
    <source>
        <strain>ATCC 33277 / DSM 20709 / CIP 103683 / JCM 12257 / NCTC 11834 / 2561</strain>
    </source>
</reference>
<comment type="function">
    <text evidence="1">DNA ligase that catalyzes the formation of phosphodiester linkages between 5'-phosphoryl and 3'-hydroxyl groups in double-stranded DNA using NAD as a coenzyme and as the energy source for the reaction. It is essential for DNA replication and repair of damaged DNA.</text>
</comment>
<comment type="catalytic activity">
    <reaction evidence="1">
        <text>NAD(+) + (deoxyribonucleotide)n-3'-hydroxyl + 5'-phospho-(deoxyribonucleotide)m = (deoxyribonucleotide)n+m + AMP + beta-nicotinamide D-nucleotide.</text>
        <dbReference type="EC" id="6.5.1.2"/>
    </reaction>
</comment>
<comment type="cofactor">
    <cofactor evidence="1">
        <name>Mg(2+)</name>
        <dbReference type="ChEBI" id="CHEBI:18420"/>
    </cofactor>
    <cofactor evidence="1">
        <name>Mn(2+)</name>
        <dbReference type="ChEBI" id="CHEBI:29035"/>
    </cofactor>
</comment>
<comment type="similarity">
    <text evidence="1">Belongs to the NAD-dependent DNA ligase family. LigA subfamily.</text>
</comment>
<dbReference type="EC" id="6.5.1.2" evidence="1"/>
<dbReference type="EMBL" id="AP009380">
    <property type="protein sequence ID" value="BAG33907.1"/>
    <property type="molecule type" value="Genomic_DNA"/>
</dbReference>
<dbReference type="RefSeq" id="WP_012458236.1">
    <property type="nucleotide sequence ID" value="NC_010729.1"/>
</dbReference>
<dbReference type="SMR" id="B2RKL2"/>
<dbReference type="GeneID" id="29256574"/>
<dbReference type="KEGG" id="pgn:PGN_1388"/>
<dbReference type="eggNOG" id="COG0272">
    <property type="taxonomic scope" value="Bacteria"/>
</dbReference>
<dbReference type="HOGENOM" id="CLU_007764_2_1_10"/>
<dbReference type="OrthoDB" id="9759736at2"/>
<dbReference type="BioCyc" id="PGIN431947:G1G2V-1571-MONOMER"/>
<dbReference type="Proteomes" id="UP000008842">
    <property type="component" value="Chromosome"/>
</dbReference>
<dbReference type="GO" id="GO:0005829">
    <property type="term" value="C:cytosol"/>
    <property type="evidence" value="ECO:0007669"/>
    <property type="project" value="TreeGrafter"/>
</dbReference>
<dbReference type="GO" id="GO:0003677">
    <property type="term" value="F:DNA binding"/>
    <property type="evidence" value="ECO:0007669"/>
    <property type="project" value="InterPro"/>
</dbReference>
<dbReference type="GO" id="GO:0003911">
    <property type="term" value="F:DNA ligase (NAD+) activity"/>
    <property type="evidence" value="ECO:0007669"/>
    <property type="project" value="UniProtKB-UniRule"/>
</dbReference>
<dbReference type="GO" id="GO:0046872">
    <property type="term" value="F:metal ion binding"/>
    <property type="evidence" value="ECO:0007669"/>
    <property type="project" value="UniProtKB-KW"/>
</dbReference>
<dbReference type="GO" id="GO:0006281">
    <property type="term" value="P:DNA repair"/>
    <property type="evidence" value="ECO:0007669"/>
    <property type="project" value="UniProtKB-KW"/>
</dbReference>
<dbReference type="GO" id="GO:0006260">
    <property type="term" value="P:DNA replication"/>
    <property type="evidence" value="ECO:0007669"/>
    <property type="project" value="UniProtKB-KW"/>
</dbReference>
<dbReference type="CDD" id="cd17748">
    <property type="entry name" value="BRCT_DNA_ligase_like"/>
    <property type="match status" value="1"/>
</dbReference>
<dbReference type="CDD" id="cd00114">
    <property type="entry name" value="LIGANc"/>
    <property type="match status" value="1"/>
</dbReference>
<dbReference type="FunFam" id="1.10.150.20:FF:000006">
    <property type="entry name" value="DNA ligase"/>
    <property type="match status" value="1"/>
</dbReference>
<dbReference type="FunFam" id="1.10.287.610:FF:000002">
    <property type="entry name" value="DNA ligase"/>
    <property type="match status" value="1"/>
</dbReference>
<dbReference type="FunFam" id="3.30.470.30:FF:000001">
    <property type="entry name" value="DNA ligase"/>
    <property type="match status" value="1"/>
</dbReference>
<dbReference type="Gene3D" id="6.20.10.30">
    <property type="match status" value="1"/>
</dbReference>
<dbReference type="Gene3D" id="1.10.150.20">
    <property type="entry name" value="5' to 3' exonuclease, C-terminal subdomain"/>
    <property type="match status" value="2"/>
</dbReference>
<dbReference type="Gene3D" id="3.40.50.10190">
    <property type="entry name" value="BRCT domain"/>
    <property type="match status" value="1"/>
</dbReference>
<dbReference type="Gene3D" id="3.30.470.30">
    <property type="entry name" value="DNA ligase/mRNA capping enzyme"/>
    <property type="match status" value="1"/>
</dbReference>
<dbReference type="Gene3D" id="1.10.287.610">
    <property type="entry name" value="Helix hairpin bin"/>
    <property type="match status" value="1"/>
</dbReference>
<dbReference type="Gene3D" id="2.40.50.140">
    <property type="entry name" value="Nucleic acid-binding proteins"/>
    <property type="match status" value="1"/>
</dbReference>
<dbReference type="HAMAP" id="MF_01588">
    <property type="entry name" value="DNA_ligase_A"/>
    <property type="match status" value="1"/>
</dbReference>
<dbReference type="InterPro" id="IPR001357">
    <property type="entry name" value="BRCT_dom"/>
</dbReference>
<dbReference type="InterPro" id="IPR036420">
    <property type="entry name" value="BRCT_dom_sf"/>
</dbReference>
<dbReference type="InterPro" id="IPR041663">
    <property type="entry name" value="DisA/LigA_HHH"/>
</dbReference>
<dbReference type="InterPro" id="IPR001679">
    <property type="entry name" value="DNA_ligase"/>
</dbReference>
<dbReference type="InterPro" id="IPR018239">
    <property type="entry name" value="DNA_ligase_AS"/>
</dbReference>
<dbReference type="InterPro" id="IPR033136">
    <property type="entry name" value="DNA_ligase_CS"/>
</dbReference>
<dbReference type="InterPro" id="IPR013839">
    <property type="entry name" value="DNAligase_adenylation"/>
</dbReference>
<dbReference type="InterPro" id="IPR013840">
    <property type="entry name" value="DNAligase_N"/>
</dbReference>
<dbReference type="InterPro" id="IPR003583">
    <property type="entry name" value="Hlx-hairpin-Hlx_DNA-bd_motif"/>
</dbReference>
<dbReference type="InterPro" id="IPR012340">
    <property type="entry name" value="NA-bd_OB-fold"/>
</dbReference>
<dbReference type="InterPro" id="IPR004150">
    <property type="entry name" value="NAD_DNA_ligase_OB"/>
</dbReference>
<dbReference type="InterPro" id="IPR010994">
    <property type="entry name" value="RuvA_2-like"/>
</dbReference>
<dbReference type="InterPro" id="IPR004149">
    <property type="entry name" value="Znf_DNAligase_C4"/>
</dbReference>
<dbReference type="NCBIfam" id="TIGR00575">
    <property type="entry name" value="dnlj"/>
    <property type="match status" value="1"/>
</dbReference>
<dbReference type="NCBIfam" id="NF005932">
    <property type="entry name" value="PRK07956.1"/>
    <property type="match status" value="1"/>
</dbReference>
<dbReference type="PANTHER" id="PTHR23389">
    <property type="entry name" value="CHROMOSOME TRANSMISSION FIDELITY FACTOR 18"/>
    <property type="match status" value="1"/>
</dbReference>
<dbReference type="PANTHER" id="PTHR23389:SF9">
    <property type="entry name" value="DNA LIGASE"/>
    <property type="match status" value="1"/>
</dbReference>
<dbReference type="Pfam" id="PF00533">
    <property type="entry name" value="BRCT"/>
    <property type="match status" value="1"/>
</dbReference>
<dbReference type="Pfam" id="PF01653">
    <property type="entry name" value="DNA_ligase_aden"/>
    <property type="match status" value="1"/>
</dbReference>
<dbReference type="Pfam" id="PF03120">
    <property type="entry name" value="DNA_ligase_OB"/>
    <property type="match status" value="1"/>
</dbReference>
<dbReference type="Pfam" id="PF03119">
    <property type="entry name" value="DNA_ligase_ZBD"/>
    <property type="match status" value="1"/>
</dbReference>
<dbReference type="Pfam" id="PF12826">
    <property type="entry name" value="HHH_2"/>
    <property type="match status" value="1"/>
</dbReference>
<dbReference type="Pfam" id="PF14520">
    <property type="entry name" value="HHH_5"/>
    <property type="match status" value="1"/>
</dbReference>
<dbReference type="Pfam" id="PF22745">
    <property type="entry name" value="Nlig-Ia"/>
    <property type="match status" value="1"/>
</dbReference>
<dbReference type="PIRSF" id="PIRSF001604">
    <property type="entry name" value="LigA"/>
    <property type="match status" value="1"/>
</dbReference>
<dbReference type="SMART" id="SM00292">
    <property type="entry name" value="BRCT"/>
    <property type="match status" value="1"/>
</dbReference>
<dbReference type="SMART" id="SM00278">
    <property type="entry name" value="HhH1"/>
    <property type="match status" value="2"/>
</dbReference>
<dbReference type="SMART" id="SM00532">
    <property type="entry name" value="LIGANc"/>
    <property type="match status" value="1"/>
</dbReference>
<dbReference type="SUPFAM" id="SSF52113">
    <property type="entry name" value="BRCT domain"/>
    <property type="match status" value="1"/>
</dbReference>
<dbReference type="SUPFAM" id="SSF56091">
    <property type="entry name" value="DNA ligase/mRNA capping enzyme, catalytic domain"/>
    <property type="match status" value="1"/>
</dbReference>
<dbReference type="SUPFAM" id="SSF50249">
    <property type="entry name" value="Nucleic acid-binding proteins"/>
    <property type="match status" value="1"/>
</dbReference>
<dbReference type="SUPFAM" id="SSF47781">
    <property type="entry name" value="RuvA domain 2-like"/>
    <property type="match status" value="1"/>
</dbReference>
<dbReference type="PROSITE" id="PS50172">
    <property type="entry name" value="BRCT"/>
    <property type="match status" value="1"/>
</dbReference>
<dbReference type="PROSITE" id="PS01055">
    <property type="entry name" value="DNA_LIGASE_N1"/>
    <property type="match status" value="1"/>
</dbReference>
<dbReference type="PROSITE" id="PS01056">
    <property type="entry name" value="DNA_LIGASE_N2"/>
    <property type="match status" value="1"/>
</dbReference>
<gene>
    <name evidence="1" type="primary">ligA</name>
    <name type="ordered locus">PGN_1388</name>
</gene>
<sequence length="669" mass="75031">MEKIVPPAVRIEELRRILREHEYRYYVLSSPTIDDFEYDAMMKQLEELEREYPEWDSPDSPTHRVGSDKTEGFASVRHDRPMLSLSNTYNYDEIGDFYRRVSEGLQGAPFEIVAELKFDGLSISLIYEDGMLVRAVTRGDGIMGDDVTANVRTIRSVPLRLRGDDYPRMLEVRGEILLPFKEFDRINAQREAEGEPLFANPRNAASGTIKQLDPHIVAGRNLDAYFYYLYSDEPLAENHYDRLMQARQWGFKVSDAVTLCCSKEDVYAFIDRFDTERLTLPVATDGIVLKVNAPAQQDLLGFTAKSPRWAIAYKYQAERVRTRLQHVSYQVGRTGAVTPVANLDPVLISGTVVRRASLHNADFIAEKDLHEGDFVYVEKGGEIIPKIVGVDTDARSIDGRPIVFTVLCPDCATPLVREQGEAAYYCPNAEGCPQQQKGRLEHYCGRKAADINIGPETIELLYSRNMIRNVADFYALTEEQLLTLPGFKKRAAAKLLDSIEASKARPYQAILFGLGIRFVGETVAKKLAAVYPSIDALAAATSEELVQIDEIGERIAAAVLHFFSLRQNRELIERLRLAGVSLEAETVSVPVSARLAGKTVVISGTFEKYSRDEYKAMVEDNGGRMAGSVSSKTSFILAGSDMGPSKREKAEKLGVRLMSEEEFLRLIEE</sequence>
<keyword id="KW-0227">DNA damage</keyword>
<keyword id="KW-0234">DNA repair</keyword>
<keyword id="KW-0235">DNA replication</keyword>
<keyword id="KW-0436">Ligase</keyword>
<keyword id="KW-0460">Magnesium</keyword>
<keyword id="KW-0464">Manganese</keyword>
<keyword id="KW-0479">Metal-binding</keyword>
<keyword id="KW-0520">NAD</keyword>
<keyword id="KW-0862">Zinc</keyword>
<organism>
    <name type="scientific">Porphyromonas gingivalis (strain ATCC 33277 / DSM 20709 / CIP 103683 / JCM 12257 / NCTC 11834 / 2561)</name>
    <dbReference type="NCBI Taxonomy" id="431947"/>
    <lineage>
        <taxon>Bacteria</taxon>
        <taxon>Pseudomonadati</taxon>
        <taxon>Bacteroidota</taxon>
        <taxon>Bacteroidia</taxon>
        <taxon>Bacteroidales</taxon>
        <taxon>Porphyromonadaceae</taxon>
        <taxon>Porphyromonas</taxon>
    </lineage>
</organism>
<name>DNLJ_PORG3</name>
<accession>B2RKL2</accession>
<feature type="chain" id="PRO_0000380443" description="DNA ligase">
    <location>
        <begin position="1"/>
        <end position="669"/>
    </location>
</feature>
<feature type="domain" description="BRCT" evidence="1">
    <location>
        <begin position="590"/>
        <end position="669"/>
    </location>
</feature>
<feature type="region of interest" description="Disordered" evidence="2">
    <location>
        <begin position="52"/>
        <end position="71"/>
    </location>
</feature>
<feature type="compositionally biased region" description="Basic and acidic residues" evidence="2">
    <location>
        <begin position="61"/>
        <end position="71"/>
    </location>
</feature>
<feature type="active site" description="N6-AMP-lysine intermediate" evidence="1">
    <location>
        <position position="117"/>
    </location>
</feature>
<feature type="binding site" evidence="1">
    <location>
        <begin position="35"/>
        <end position="39"/>
    </location>
    <ligand>
        <name>NAD(+)</name>
        <dbReference type="ChEBI" id="CHEBI:57540"/>
    </ligand>
</feature>
<feature type="binding site" evidence="1">
    <location>
        <begin position="84"/>
        <end position="85"/>
    </location>
    <ligand>
        <name>NAD(+)</name>
        <dbReference type="ChEBI" id="CHEBI:57540"/>
    </ligand>
</feature>
<feature type="binding site" evidence="1">
    <location>
        <position position="115"/>
    </location>
    <ligand>
        <name>NAD(+)</name>
        <dbReference type="ChEBI" id="CHEBI:57540"/>
    </ligand>
</feature>
<feature type="binding site" evidence="1">
    <location>
        <position position="138"/>
    </location>
    <ligand>
        <name>NAD(+)</name>
        <dbReference type="ChEBI" id="CHEBI:57540"/>
    </ligand>
</feature>
<feature type="binding site" evidence="1">
    <location>
        <position position="175"/>
    </location>
    <ligand>
        <name>NAD(+)</name>
        <dbReference type="ChEBI" id="CHEBI:57540"/>
    </ligand>
</feature>
<feature type="binding site" evidence="1">
    <location>
        <position position="290"/>
    </location>
    <ligand>
        <name>NAD(+)</name>
        <dbReference type="ChEBI" id="CHEBI:57540"/>
    </ligand>
</feature>
<feature type="binding site" evidence="1">
    <location>
        <position position="314"/>
    </location>
    <ligand>
        <name>NAD(+)</name>
        <dbReference type="ChEBI" id="CHEBI:57540"/>
    </ligand>
</feature>
<feature type="binding site" evidence="1">
    <location>
        <position position="408"/>
    </location>
    <ligand>
        <name>Zn(2+)</name>
        <dbReference type="ChEBI" id="CHEBI:29105"/>
    </ligand>
</feature>
<feature type="binding site" evidence="1">
    <location>
        <position position="411"/>
    </location>
    <ligand>
        <name>Zn(2+)</name>
        <dbReference type="ChEBI" id="CHEBI:29105"/>
    </ligand>
</feature>
<feature type="binding site" evidence="1">
    <location>
        <position position="426"/>
    </location>
    <ligand>
        <name>Zn(2+)</name>
        <dbReference type="ChEBI" id="CHEBI:29105"/>
    </ligand>
</feature>
<feature type="binding site" evidence="1">
    <location>
        <position position="432"/>
    </location>
    <ligand>
        <name>Zn(2+)</name>
        <dbReference type="ChEBI" id="CHEBI:29105"/>
    </ligand>
</feature>
<evidence type="ECO:0000255" key="1">
    <source>
        <dbReference type="HAMAP-Rule" id="MF_01588"/>
    </source>
</evidence>
<evidence type="ECO:0000256" key="2">
    <source>
        <dbReference type="SAM" id="MobiDB-lite"/>
    </source>
</evidence>
<proteinExistence type="inferred from homology"/>
<protein>
    <recommendedName>
        <fullName evidence="1">DNA ligase</fullName>
        <ecNumber evidence="1">6.5.1.2</ecNumber>
    </recommendedName>
    <alternativeName>
        <fullName evidence="1">Polydeoxyribonucleotide synthase [NAD(+)]</fullName>
    </alternativeName>
</protein>